<proteinExistence type="evidence at transcript level"/>
<gene>
    <name type="primary">sobpa</name>
    <name type="synonym">jxc1a</name>
</gene>
<sequence length="936" mass="99903">MAEMEKEGRPPESKRSRKPAHPVKREINAEMKVPSNRPLPGAGQAGNLHGNSPYLMSFAENTMNELLGWYGYDKVELRDSDDIEIRNYPDGEMRQHISVLKENSLPKASTLENSSGSPPHANSSGSTPTSRNGVTAESSVNPSSSKEHGGLPIIVPLIPPPLIKAPAEEDSSNVQIMCAWCQKVGVKRYSLSMGSELKSFCSEKCFAACRRAYFKRNKLGYVRNCSAREEEGVPTHSLSKDTPRLVLKTNSDVLVCDWCKHIRHTKEYLDFGAGERRLQFCSAKCLNQYKMDIFYKETQAALPGGLCNPPLPTSDTKSESGAGVQLLTPESWSAPLSELRSRKAPSPVGATIAGPSGSTSGSPSEAGTVCSSSSSSSSSSSSTKIPTPRPHESPSLPPPHPPPISGLHPALGMPPGSPPMVMTPRGPVPFPIFMEHQMMQQMRPPFLRPPGPNSPHSNPMIPGIGPPPPPRTLCPPSSPMHRPLLSPHLHPSSTPTLSGNPPGIMPPHPAAHMPGLPFPPVNMMPSGPIPVPPIMNIGMPSLAPLVPPPTLLVPYPVIVPLPVPIPIPVPIPYNPQRSGDRPGNDGTLPNTANEQKDSKAPPSFSSRGEERDFQKAPPNSDTLSPEFSKQTEQGRTNMADLMVKMENSGKGSSEHSHKDTPADGVIDLTTSHRSRQQLVIQRAVTCVQVKAEPGLSPPPALLGETELDGSTSISTGTAKDDHRDTYSNAESPLASVALPCADPSYCSGTPPLSQPITCSASIIPSNITTAKTEPGSATPCNVIVNGSCNLPPTESLIRTPPLEQRPQVDTCRRTATVCDEPAGADLEGEDLKENSCLATEKDSAGKRCSNDQSAITTGTGDDKSQSPEDDPSGEDHAYALPLMPKPGCVIQPVPKPAEKTAAILPCGLTAPLTGTVPMEMEPPLKRRCLRIRNQNK</sequence>
<protein>
    <recommendedName>
        <fullName>Sine oculis-binding protein homolog A</fullName>
    </recommendedName>
    <alternativeName>
        <fullName>Jackson circler protein 1A</fullName>
    </alternativeName>
</protein>
<feature type="chain" id="PRO_0000312236" description="Sine oculis-binding protein homolog A">
    <location>
        <begin position="1"/>
        <end position="936"/>
    </location>
</feature>
<feature type="zinc finger region" description="FCS-type 1" evidence="2">
    <location>
        <begin position="169"/>
        <end position="207"/>
    </location>
</feature>
<feature type="zinc finger region" description="FCS-type 2" evidence="2">
    <location>
        <begin position="247"/>
        <end position="287"/>
    </location>
</feature>
<feature type="region of interest" description="Disordered" evidence="3">
    <location>
        <begin position="1"/>
        <end position="46"/>
    </location>
</feature>
<feature type="region of interest" description="Disordered" evidence="3">
    <location>
        <begin position="108"/>
        <end position="151"/>
    </location>
</feature>
<feature type="region of interest" description="Disordered" evidence="3">
    <location>
        <begin position="311"/>
        <end position="330"/>
    </location>
</feature>
<feature type="region of interest" description="Disordered" evidence="3">
    <location>
        <begin position="336"/>
        <end position="424"/>
    </location>
</feature>
<feature type="region of interest" description="Disordered" evidence="3">
    <location>
        <begin position="486"/>
        <end position="511"/>
    </location>
</feature>
<feature type="region of interest" description="Disordered" evidence="3">
    <location>
        <begin position="574"/>
        <end position="632"/>
    </location>
</feature>
<feature type="region of interest" description="Disordered" evidence="3">
    <location>
        <begin position="697"/>
        <end position="727"/>
    </location>
</feature>
<feature type="region of interest" description="Disordered" evidence="3">
    <location>
        <begin position="842"/>
        <end position="877"/>
    </location>
</feature>
<feature type="compositionally biased region" description="Basic and acidic residues" evidence="3">
    <location>
        <begin position="1"/>
        <end position="14"/>
    </location>
</feature>
<feature type="compositionally biased region" description="Polar residues" evidence="3">
    <location>
        <begin position="108"/>
        <end position="144"/>
    </location>
</feature>
<feature type="compositionally biased region" description="Low complexity" evidence="3">
    <location>
        <begin position="349"/>
        <end position="382"/>
    </location>
</feature>
<feature type="compositionally biased region" description="Pro residues" evidence="3">
    <location>
        <begin position="395"/>
        <end position="404"/>
    </location>
</feature>
<feature type="compositionally biased region" description="Polar residues" evidence="3">
    <location>
        <begin position="617"/>
        <end position="632"/>
    </location>
</feature>
<feature type="compositionally biased region" description="Polar residues" evidence="3">
    <location>
        <begin position="708"/>
        <end position="717"/>
    </location>
</feature>
<feature type="compositionally biased region" description="Polar residues" evidence="3">
    <location>
        <begin position="850"/>
        <end position="859"/>
    </location>
</feature>
<comment type="function">
    <text evidence="1">Implicated in development of the cochlea.</text>
</comment>
<comment type="similarity">
    <text evidence="2">Belongs to the SOBP family.</text>
</comment>
<reference evidence="4" key="1">
    <citation type="submission" date="2006-05" db="EMBL/GenBank/DDBJ databases">
        <title>Mutations in Jxc1 cause deafness, vestibular deficits and cochlea malformation in the Jackson circler (jc) mutant mouse.</title>
        <authorList>
            <person name="Noben-Trauth K."/>
        </authorList>
    </citation>
    <scope>NUCLEOTIDE SEQUENCE [MRNA]</scope>
</reference>
<accession>A5X7A0</accession>
<dbReference type="EMBL" id="DQ655703">
    <property type="protein sequence ID" value="ABG45863.1"/>
    <property type="molecule type" value="mRNA"/>
</dbReference>
<dbReference type="RefSeq" id="NP_001092088.1">
    <property type="nucleotide sequence ID" value="NM_001098618.1"/>
</dbReference>
<dbReference type="FunCoup" id="A5X7A0">
    <property type="interactions" value="1254"/>
</dbReference>
<dbReference type="STRING" id="7955.ENSDARP00000070897"/>
<dbReference type="PaxDb" id="7955-ENSDARP00000070897"/>
<dbReference type="GeneID" id="573683"/>
<dbReference type="KEGG" id="dre:573683"/>
<dbReference type="AGR" id="ZFIN:ZDB-GENE-090313-313"/>
<dbReference type="CTD" id="573683"/>
<dbReference type="ZFIN" id="ZDB-GENE-090313-313">
    <property type="gene designation" value="sobpa"/>
</dbReference>
<dbReference type="eggNOG" id="ENOG502QZ8A">
    <property type="taxonomic scope" value="Eukaryota"/>
</dbReference>
<dbReference type="InParanoid" id="A5X7A0"/>
<dbReference type="OrthoDB" id="6250723at2759"/>
<dbReference type="PRO" id="PR:A5X7A0"/>
<dbReference type="Proteomes" id="UP000000437">
    <property type="component" value="Chromosome 13"/>
</dbReference>
<dbReference type="GO" id="GO:0005634">
    <property type="term" value="C:nucleus"/>
    <property type="evidence" value="ECO:0000318"/>
    <property type="project" value="GO_Central"/>
</dbReference>
<dbReference type="GO" id="GO:0008270">
    <property type="term" value="F:zinc ion binding"/>
    <property type="evidence" value="ECO:0007669"/>
    <property type="project" value="UniProtKB-KW"/>
</dbReference>
<dbReference type="GO" id="GO:0048513">
    <property type="term" value="P:animal organ development"/>
    <property type="evidence" value="ECO:0000318"/>
    <property type="project" value="GO_Central"/>
</dbReference>
<dbReference type="InterPro" id="IPR026092">
    <property type="entry name" value="RAI2/SOBP"/>
</dbReference>
<dbReference type="PANTHER" id="PTHR23186">
    <property type="entry name" value="RETINOIC ACID-INDUCED PROTEIN 2"/>
    <property type="match status" value="1"/>
</dbReference>
<dbReference type="PANTHER" id="PTHR23186:SF2">
    <property type="entry name" value="SINE OCULIS-BINDING PROTEIN HOMOLOG"/>
    <property type="match status" value="1"/>
</dbReference>
<dbReference type="Pfam" id="PF15279">
    <property type="entry name" value="SOBP"/>
    <property type="match status" value="1"/>
</dbReference>
<evidence type="ECO:0000250" key="1">
    <source>
        <dbReference type="UniProtKB" id="Q0P5V2"/>
    </source>
</evidence>
<evidence type="ECO:0000255" key="2"/>
<evidence type="ECO:0000256" key="3">
    <source>
        <dbReference type="SAM" id="MobiDB-lite"/>
    </source>
</evidence>
<evidence type="ECO:0000312" key="4">
    <source>
        <dbReference type="EMBL" id="ABG45863.1"/>
    </source>
</evidence>
<organism>
    <name type="scientific">Danio rerio</name>
    <name type="common">Zebrafish</name>
    <name type="synonym">Brachydanio rerio</name>
    <dbReference type="NCBI Taxonomy" id="7955"/>
    <lineage>
        <taxon>Eukaryota</taxon>
        <taxon>Metazoa</taxon>
        <taxon>Chordata</taxon>
        <taxon>Craniata</taxon>
        <taxon>Vertebrata</taxon>
        <taxon>Euteleostomi</taxon>
        <taxon>Actinopterygii</taxon>
        <taxon>Neopterygii</taxon>
        <taxon>Teleostei</taxon>
        <taxon>Ostariophysi</taxon>
        <taxon>Cypriniformes</taxon>
        <taxon>Danionidae</taxon>
        <taxon>Danioninae</taxon>
        <taxon>Danio</taxon>
    </lineage>
</organism>
<name>SOBPA_DANRE</name>
<keyword id="KW-0479">Metal-binding</keyword>
<keyword id="KW-1185">Reference proteome</keyword>
<keyword id="KW-0677">Repeat</keyword>
<keyword id="KW-0862">Zinc</keyword>
<keyword id="KW-0863">Zinc-finger</keyword>